<proteinExistence type="evidence at transcript level"/>
<protein>
    <recommendedName>
        <fullName>1-aminocyclopropane-1-carboxylate oxidase 1</fullName>
        <shortName>ACC oxidase 1</shortName>
        <ecNumber>1.14.17.4</ecNumber>
    </recommendedName>
    <alternativeName>
        <fullName>Ethylene-forming enzyme</fullName>
        <shortName>EFE</shortName>
    </alternativeName>
    <alternativeName>
        <fullName>PMEL1</fullName>
    </alternativeName>
</protein>
<comment type="catalytic activity">
    <reaction>
        <text>1-aminocyclopropane-1-carboxylate + L-ascorbate + O2 = ethene + L-dehydroascorbate + hydrogen cyanide + CO2 + 2 H2O</text>
        <dbReference type="Rhea" id="RHEA:23640"/>
        <dbReference type="ChEBI" id="CHEBI:15377"/>
        <dbReference type="ChEBI" id="CHEBI:15379"/>
        <dbReference type="ChEBI" id="CHEBI:16526"/>
        <dbReference type="ChEBI" id="CHEBI:18153"/>
        <dbReference type="ChEBI" id="CHEBI:18407"/>
        <dbReference type="ChEBI" id="CHEBI:38290"/>
        <dbReference type="ChEBI" id="CHEBI:58360"/>
        <dbReference type="ChEBI" id="CHEBI:58539"/>
        <dbReference type="EC" id="1.14.17.4"/>
    </reaction>
</comment>
<comment type="cofactor">
    <cofactor>
        <name>Fe cation</name>
        <dbReference type="ChEBI" id="CHEBI:24875"/>
    </cofactor>
</comment>
<comment type="pathway">
    <text>Alkene biosynthesis; ethylene biosynthesis via S-adenosyl-L-methionine; ethylene from S-adenosyl-L-methionine: step 2/2.</text>
</comment>
<comment type="tissue specificity">
    <text>Fruit.</text>
</comment>
<comment type="developmental stage">
    <text>Expressed during fruit ripening.</text>
</comment>
<comment type="similarity">
    <text evidence="2">Belongs to the iron/ascorbate-dependent oxidoreductase family.</text>
</comment>
<feature type="chain" id="PRO_0000067254" description="1-aminocyclopropane-1-carboxylate oxidase 1">
    <location>
        <begin position="1"/>
        <end position="318"/>
    </location>
</feature>
<feature type="domain" description="Fe2OG dioxygenase" evidence="1">
    <location>
        <begin position="153"/>
        <end position="254"/>
    </location>
</feature>
<feature type="binding site" evidence="1">
    <location>
        <position position="177"/>
    </location>
    <ligand>
        <name>Fe cation</name>
        <dbReference type="ChEBI" id="CHEBI:24875"/>
    </ligand>
</feature>
<feature type="binding site" evidence="1">
    <location>
        <position position="179"/>
    </location>
    <ligand>
        <name>Fe cation</name>
        <dbReference type="ChEBI" id="CHEBI:24875"/>
    </ligand>
</feature>
<feature type="binding site" evidence="1">
    <location>
        <position position="234"/>
    </location>
    <ligand>
        <name>Fe cation</name>
        <dbReference type="ChEBI" id="CHEBI:24875"/>
    </ligand>
</feature>
<keyword id="KW-0266">Ethylene biosynthesis</keyword>
<keyword id="KW-0292">Fruit ripening</keyword>
<keyword id="KW-0408">Iron</keyword>
<keyword id="KW-0479">Metal-binding</keyword>
<keyword id="KW-0560">Oxidoreductase</keyword>
<keyword id="KW-1185">Reference proteome</keyword>
<keyword id="KW-0847">Vitamin C</keyword>
<sequence>MAVFPIINLENINDDGRAKILEQIEDACQNWGFFELVNHGIPHEFLDMVEKMTRDHYKKCMEERFKETVLSKGLEAAQAEVNDMDWESTFFLRHLPESNISQMSDLDEEYKKIMKEFAKKLENLAEELLDLLCENLGLEKGYLKKAFYGSKGPTFGTKVSNYPPCPKPDLIKGLRAHTDAGGIILLFQDDKVSGLQLLKDGNWIDVPPMRHAIVVNLGDQLEVITNGRYKSVMHRVLTQTSGTGRMSIASFYNPGSDAVIYPAPALVEKDQDEEKKEVYPKFVFEDYMKLYLGVKFQAKEPRFEAMKANANLGPMATA</sequence>
<accession>Q04644</accession>
<evidence type="ECO:0000255" key="1">
    <source>
        <dbReference type="PROSITE-ProRule" id="PRU00805"/>
    </source>
</evidence>
<evidence type="ECO:0000305" key="2"/>
<organism>
    <name type="scientific">Cucumis melo</name>
    <name type="common">Muskmelon</name>
    <dbReference type="NCBI Taxonomy" id="3656"/>
    <lineage>
        <taxon>Eukaryota</taxon>
        <taxon>Viridiplantae</taxon>
        <taxon>Streptophyta</taxon>
        <taxon>Embryophyta</taxon>
        <taxon>Tracheophyta</taxon>
        <taxon>Spermatophyta</taxon>
        <taxon>Magnoliopsida</taxon>
        <taxon>eudicotyledons</taxon>
        <taxon>Gunneridae</taxon>
        <taxon>Pentapetalae</taxon>
        <taxon>rosids</taxon>
        <taxon>fabids</taxon>
        <taxon>Cucurbitales</taxon>
        <taxon>Cucurbitaceae</taxon>
        <taxon>Benincaseae</taxon>
        <taxon>Cucumis</taxon>
    </lineage>
</organism>
<dbReference type="EC" id="1.14.17.4"/>
<dbReference type="EMBL" id="X69935">
    <property type="protein sequence ID" value="CAA49553.1"/>
    <property type="molecule type" value="mRNA"/>
</dbReference>
<dbReference type="EMBL" id="D31727">
    <property type="protein sequence ID" value="BAA06526.1"/>
    <property type="molecule type" value="mRNA"/>
</dbReference>
<dbReference type="EMBL" id="X95551">
    <property type="protein sequence ID" value="CAA64797.1"/>
    <property type="molecule type" value="Genomic_DNA"/>
</dbReference>
<dbReference type="PIR" id="JC6059">
    <property type="entry name" value="JC6059"/>
</dbReference>
<dbReference type="RefSeq" id="NP_001284392.1">
    <property type="nucleotide sequence ID" value="NM_001297463.1"/>
</dbReference>
<dbReference type="SMR" id="Q04644"/>
<dbReference type="FunCoup" id="Q04644">
    <property type="interactions" value="135"/>
</dbReference>
<dbReference type="GeneID" id="103491357"/>
<dbReference type="KEGG" id="cmo:103491357"/>
<dbReference type="eggNOG" id="KOG0143">
    <property type="taxonomic scope" value="Eukaryota"/>
</dbReference>
<dbReference type="InParanoid" id="Q04644"/>
<dbReference type="OrthoDB" id="599965at71240"/>
<dbReference type="BioCyc" id="MetaCyc:MONOMER-15544"/>
<dbReference type="UniPathway" id="UPA00384">
    <property type="reaction ID" value="UER00563"/>
</dbReference>
<dbReference type="Proteomes" id="UP000089565">
    <property type="component" value="Unplaced"/>
</dbReference>
<dbReference type="Proteomes" id="UP000596662">
    <property type="component" value="Unplaced"/>
</dbReference>
<dbReference type="GO" id="GO:0009815">
    <property type="term" value="F:1-aminocyclopropane-1-carboxylate oxidase activity"/>
    <property type="evidence" value="ECO:0007669"/>
    <property type="project" value="UniProtKB-EC"/>
</dbReference>
<dbReference type="GO" id="GO:0031418">
    <property type="term" value="F:L-ascorbic acid binding"/>
    <property type="evidence" value="ECO:0007669"/>
    <property type="project" value="UniProtKB-KW"/>
</dbReference>
<dbReference type="GO" id="GO:0046872">
    <property type="term" value="F:metal ion binding"/>
    <property type="evidence" value="ECO:0007669"/>
    <property type="project" value="UniProtKB-KW"/>
</dbReference>
<dbReference type="GO" id="GO:0009693">
    <property type="term" value="P:ethylene biosynthetic process"/>
    <property type="evidence" value="ECO:0007669"/>
    <property type="project" value="UniProtKB-UniPathway"/>
</dbReference>
<dbReference type="GO" id="GO:0009835">
    <property type="term" value="P:fruit ripening"/>
    <property type="evidence" value="ECO:0007669"/>
    <property type="project" value="UniProtKB-KW"/>
</dbReference>
<dbReference type="FunFam" id="2.60.120.330:FF:000002">
    <property type="entry name" value="1-aminocyclopropane-1-carboxylate oxidase 1"/>
    <property type="match status" value="1"/>
</dbReference>
<dbReference type="Gene3D" id="2.60.120.330">
    <property type="entry name" value="B-lactam Antibiotic, Isopenicillin N Synthase, Chain"/>
    <property type="match status" value="1"/>
</dbReference>
<dbReference type="InterPro" id="IPR026992">
    <property type="entry name" value="DIOX_N"/>
</dbReference>
<dbReference type="InterPro" id="IPR044861">
    <property type="entry name" value="IPNS-like_FE2OG_OXY"/>
</dbReference>
<dbReference type="InterPro" id="IPR027443">
    <property type="entry name" value="IPNS-like_sf"/>
</dbReference>
<dbReference type="InterPro" id="IPR005123">
    <property type="entry name" value="Oxoglu/Fe-dep_dioxygenase_dom"/>
</dbReference>
<dbReference type="InterPro" id="IPR050295">
    <property type="entry name" value="Plant_2OG-oxidoreductases"/>
</dbReference>
<dbReference type="PANTHER" id="PTHR47991">
    <property type="entry name" value="OXOGLUTARATE/IRON-DEPENDENT DIOXYGENASE"/>
    <property type="match status" value="1"/>
</dbReference>
<dbReference type="Pfam" id="PF03171">
    <property type="entry name" value="2OG-FeII_Oxy"/>
    <property type="match status" value="1"/>
</dbReference>
<dbReference type="Pfam" id="PF14226">
    <property type="entry name" value="DIOX_N"/>
    <property type="match status" value="1"/>
</dbReference>
<dbReference type="SUPFAM" id="SSF51197">
    <property type="entry name" value="Clavaminate synthase-like"/>
    <property type="match status" value="1"/>
</dbReference>
<dbReference type="PROSITE" id="PS51471">
    <property type="entry name" value="FE2OG_OXY"/>
    <property type="match status" value="1"/>
</dbReference>
<name>ACCO1_CUCME</name>
<reference key="1">
    <citation type="journal article" date="1993" name="Eur. J. Biochem.">
        <title>Isolation of a ripening and wound-induced cDNA from Cucumis melo L. encoding a protein with homology to the ethylene-forming enzyme.</title>
        <authorList>
            <person name="Balague C."/>
            <person name="Watson C.F."/>
            <person name="Turner A.J."/>
            <person name="Rouge P."/>
            <person name="Picton S."/>
            <person name="Pech J.-C."/>
            <person name="Grierson D."/>
        </authorList>
    </citation>
    <scope>NUCLEOTIDE SEQUENCE [MRNA]</scope>
    <source>
        <strain>cv. Cantaloup Charentais</strain>
        <tissue>Fruit</tissue>
    </source>
</reference>
<reference key="2">
    <citation type="submission" date="1995-03" db="EMBL/GenBank/DDBJ databases">
        <authorList>
            <person name="Yamamoto M."/>
            <person name="Miki T."/>
            <person name="Ishiki Y."/>
            <person name="Nakagawa H."/>
            <person name="Ogura N."/>
            <person name="Sato T."/>
        </authorList>
    </citation>
    <scope>NUCLEOTIDE SEQUENCE</scope>
    <source>
        <strain>cv. Andes</strain>
        <tissue>Fruit</tissue>
    </source>
</reference>
<reference key="3">
    <citation type="journal article" date="1996" name="Mol. Gen. Genet.">
        <title>Structure and expression of three genes encoding ACC oxidase homologs from melon (Cucumis melo L.).</title>
        <authorList>
            <person name="Lasserre E."/>
            <person name="Bouquin T."/>
            <person name="Hernandez J.A."/>
            <person name="Bull J."/>
            <person name="Pech J.-C."/>
            <person name="Balague C."/>
        </authorList>
    </citation>
    <scope>NUCLEOTIDE SEQUENCE [GENOMIC DNA]</scope>
    <source>
        <strain>cv. Cantaloup Charentais</strain>
        <tissue>Leaf</tissue>
    </source>
</reference>
<gene>
    <name type="primary">ACO1</name>
</gene>